<dbReference type="EMBL" id="AP004435">
    <property type="protein sequence ID" value="BAC23566.1"/>
    <property type="molecule type" value="Genomic_DNA"/>
</dbReference>
<dbReference type="RefSeq" id="NP_739970.1">
    <property type="nucleotide sequence ID" value="NC_004398.1"/>
</dbReference>
<dbReference type="SMR" id="Q8HLD2"/>
<dbReference type="GeneID" id="805933"/>
<dbReference type="CTD" id="4519"/>
<dbReference type="GO" id="GO:0005743">
    <property type="term" value="C:mitochondrial inner membrane"/>
    <property type="evidence" value="ECO:0007669"/>
    <property type="project" value="UniProtKB-SubCell"/>
</dbReference>
<dbReference type="GO" id="GO:0045275">
    <property type="term" value="C:respiratory chain complex III"/>
    <property type="evidence" value="ECO:0007669"/>
    <property type="project" value="InterPro"/>
</dbReference>
<dbReference type="GO" id="GO:0046872">
    <property type="term" value="F:metal ion binding"/>
    <property type="evidence" value="ECO:0007669"/>
    <property type="project" value="UniProtKB-KW"/>
</dbReference>
<dbReference type="GO" id="GO:0008121">
    <property type="term" value="F:ubiquinol-cytochrome-c reductase activity"/>
    <property type="evidence" value="ECO:0007669"/>
    <property type="project" value="InterPro"/>
</dbReference>
<dbReference type="GO" id="GO:0006122">
    <property type="term" value="P:mitochondrial electron transport, ubiquinol to cytochrome c"/>
    <property type="evidence" value="ECO:0007669"/>
    <property type="project" value="TreeGrafter"/>
</dbReference>
<dbReference type="CDD" id="cd00290">
    <property type="entry name" value="cytochrome_b_C"/>
    <property type="match status" value="1"/>
</dbReference>
<dbReference type="CDD" id="cd00284">
    <property type="entry name" value="Cytochrome_b_N"/>
    <property type="match status" value="1"/>
</dbReference>
<dbReference type="FunFam" id="1.20.810.10:FF:000002">
    <property type="entry name" value="Cytochrome b"/>
    <property type="match status" value="1"/>
</dbReference>
<dbReference type="Gene3D" id="1.20.810.10">
    <property type="entry name" value="Cytochrome Bc1 Complex, Chain C"/>
    <property type="match status" value="1"/>
</dbReference>
<dbReference type="InterPro" id="IPR005798">
    <property type="entry name" value="Cyt_b/b6_C"/>
</dbReference>
<dbReference type="InterPro" id="IPR036150">
    <property type="entry name" value="Cyt_b/b6_C_sf"/>
</dbReference>
<dbReference type="InterPro" id="IPR005797">
    <property type="entry name" value="Cyt_b/b6_N"/>
</dbReference>
<dbReference type="InterPro" id="IPR027387">
    <property type="entry name" value="Cytb/b6-like_sf"/>
</dbReference>
<dbReference type="InterPro" id="IPR030689">
    <property type="entry name" value="Cytochrome_b"/>
</dbReference>
<dbReference type="InterPro" id="IPR048260">
    <property type="entry name" value="Cytochrome_b_C_euk/bac"/>
</dbReference>
<dbReference type="InterPro" id="IPR048259">
    <property type="entry name" value="Cytochrome_b_N_euk/bac"/>
</dbReference>
<dbReference type="InterPro" id="IPR016174">
    <property type="entry name" value="Di-haem_cyt_TM"/>
</dbReference>
<dbReference type="PANTHER" id="PTHR19271">
    <property type="entry name" value="CYTOCHROME B"/>
    <property type="match status" value="1"/>
</dbReference>
<dbReference type="PANTHER" id="PTHR19271:SF16">
    <property type="entry name" value="CYTOCHROME B"/>
    <property type="match status" value="1"/>
</dbReference>
<dbReference type="Pfam" id="PF00032">
    <property type="entry name" value="Cytochrom_B_C"/>
    <property type="match status" value="1"/>
</dbReference>
<dbReference type="Pfam" id="PF00033">
    <property type="entry name" value="Cytochrome_B"/>
    <property type="match status" value="1"/>
</dbReference>
<dbReference type="PIRSF" id="PIRSF038885">
    <property type="entry name" value="COB"/>
    <property type="match status" value="1"/>
</dbReference>
<dbReference type="SUPFAM" id="SSF81648">
    <property type="entry name" value="a domain/subunit of cytochrome bc1 complex (Ubiquinol-cytochrome c reductase)"/>
    <property type="match status" value="1"/>
</dbReference>
<dbReference type="SUPFAM" id="SSF81342">
    <property type="entry name" value="Transmembrane di-heme cytochromes"/>
    <property type="match status" value="1"/>
</dbReference>
<dbReference type="PROSITE" id="PS51003">
    <property type="entry name" value="CYTB_CTER"/>
    <property type="match status" value="1"/>
</dbReference>
<dbReference type="PROSITE" id="PS51002">
    <property type="entry name" value="CYTB_NTER"/>
    <property type="match status" value="1"/>
</dbReference>
<protein>
    <recommendedName>
        <fullName>Cytochrome b</fullName>
    </recommendedName>
    <alternativeName>
        <fullName>Complex III subunit 3</fullName>
    </alternativeName>
    <alternativeName>
        <fullName>Complex III subunit III</fullName>
    </alternativeName>
    <alternativeName>
        <fullName>Cytochrome b-c1 complex subunit 3</fullName>
    </alternativeName>
    <alternativeName>
        <fullName>Ubiquinol-cytochrome-c reductase complex cytochrome b subunit</fullName>
    </alternativeName>
</protein>
<keyword id="KW-0249">Electron transport</keyword>
<keyword id="KW-0349">Heme</keyword>
<keyword id="KW-0408">Iron</keyword>
<keyword id="KW-0472">Membrane</keyword>
<keyword id="KW-0479">Metal-binding</keyword>
<keyword id="KW-0496">Mitochondrion</keyword>
<keyword id="KW-0999">Mitochondrion inner membrane</keyword>
<keyword id="KW-0679">Respiratory chain</keyword>
<keyword id="KW-0812">Transmembrane</keyword>
<keyword id="KW-1133">Transmembrane helix</keyword>
<keyword id="KW-0813">Transport</keyword>
<keyword id="KW-0830">Ubiquinone</keyword>
<sequence>MASLRKTHPLLKIANDALVDLPTPINISVWWNFGSLLGLCLIAQILTGLFLAMHYTADIATAFSSVAHICRDVNYGWLIRNLHANGASFFFICLYLHVGRGLYYGSYLYKETWNIGVVLLLLVMMTAFVGYVLPWGQMSFWGATVITNLLSAVPYVGNTLVQWIWGGFSVDNATLTRFFAFHFLFPFIIAAMVLLHLLFLHETGSSNPTGINSGADKIPFHPYFTYKDLFGFVILLLALSILTLFSPNLLGDPDNFIPANPLVTPPHIKPEWYFLFAYAILRSIPNKLGGVLALLASILILMVVPLLHTSKQRGLMFRPLTQILFWTLVADVAILTWIGGMPVEHPFITVGQVASVLYFALFLILIPATGWAENKALKWN</sequence>
<accession>Q8HLD2</accession>
<reference key="1">
    <citation type="journal article" date="2003" name="Mol. Phylogenet. Evol.">
        <title>Major patterns of higher teleostean phylogenies: a new perspective based on 100 complete mitochondrial DNA sequences.</title>
        <authorList>
            <person name="Miya M."/>
            <person name="Takeshima H."/>
            <person name="Endo H."/>
            <person name="Ishiguro N.B."/>
            <person name="Inoue J.G."/>
            <person name="Mukai T."/>
            <person name="Satoh T.P."/>
            <person name="Yamaguchi M."/>
            <person name="Kawaguchi A."/>
            <person name="Mabuchi K."/>
            <person name="Shirai S.M."/>
            <person name="Nishida M."/>
        </authorList>
    </citation>
    <scope>NUCLEOTIDE SEQUENCE [GENOMIC DNA]</scope>
</reference>
<proteinExistence type="inferred from homology"/>
<geneLocation type="mitochondrion"/>
<evidence type="ECO:0000250" key="1"/>
<evidence type="ECO:0000250" key="2">
    <source>
        <dbReference type="UniProtKB" id="P00157"/>
    </source>
</evidence>
<evidence type="ECO:0000255" key="3">
    <source>
        <dbReference type="PROSITE-ProRule" id="PRU00967"/>
    </source>
</evidence>
<evidence type="ECO:0000255" key="4">
    <source>
        <dbReference type="PROSITE-ProRule" id="PRU00968"/>
    </source>
</evidence>
<name>CYB_ALLNG</name>
<organism>
    <name type="scientific">Allocyttus niger</name>
    <name type="common">Black oreo dory</name>
    <dbReference type="NCBI Taxonomy" id="181445"/>
    <lineage>
        <taxon>Eukaryota</taxon>
        <taxon>Metazoa</taxon>
        <taxon>Chordata</taxon>
        <taxon>Craniata</taxon>
        <taxon>Vertebrata</taxon>
        <taxon>Euteleostomi</taxon>
        <taxon>Actinopterygii</taxon>
        <taxon>Neopterygii</taxon>
        <taxon>Teleostei</taxon>
        <taxon>Neoteleostei</taxon>
        <taxon>Acanthomorphata</taxon>
        <taxon>Zeiogadaria</taxon>
        <taxon>Zeariae</taxon>
        <taxon>Zeiformes</taxon>
        <taxon>Oreosomatidae</taxon>
        <taxon>Allocyttus</taxon>
    </lineage>
</organism>
<gene>
    <name type="primary">mt-cyb</name>
    <name type="synonym">cob</name>
    <name type="synonym">cytb</name>
    <name type="synonym">mtcyb</name>
</gene>
<feature type="chain" id="PRO_0000060567" description="Cytochrome b">
    <location>
        <begin position="1"/>
        <end position="380"/>
    </location>
</feature>
<feature type="transmembrane region" description="Helical" evidence="2">
    <location>
        <begin position="33"/>
        <end position="53"/>
    </location>
</feature>
<feature type="transmembrane region" description="Helical" evidence="2">
    <location>
        <begin position="77"/>
        <end position="98"/>
    </location>
</feature>
<feature type="transmembrane region" description="Helical" evidence="2">
    <location>
        <begin position="113"/>
        <end position="133"/>
    </location>
</feature>
<feature type="transmembrane region" description="Helical" evidence="2">
    <location>
        <begin position="178"/>
        <end position="198"/>
    </location>
</feature>
<feature type="transmembrane region" description="Helical" evidence="2">
    <location>
        <begin position="226"/>
        <end position="246"/>
    </location>
</feature>
<feature type="transmembrane region" description="Helical" evidence="2">
    <location>
        <begin position="288"/>
        <end position="308"/>
    </location>
</feature>
<feature type="transmembrane region" description="Helical" evidence="2">
    <location>
        <begin position="320"/>
        <end position="340"/>
    </location>
</feature>
<feature type="transmembrane region" description="Helical" evidence="2">
    <location>
        <begin position="347"/>
        <end position="367"/>
    </location>
</feature>
<feature type="binding site" description="axial binding residue" evidence="2">
    <location>
        <position position="83"/>
    </location>
    <ligand>
        <name>heme b</name>
        <dbReference type="ChEBI" id="CHEBI:60344"/>
        <label>b562</label>
    </ligand>
    <ligandPart>
        <name>Fe</name>
        <dbReference type="ChEBI" id="CHEBI:18248"/>
    </ligandPart>
</feature>
<feature type="binding site" description="axial binding residue" evidence="2">
    <location>
        <position position="97"/>
    </location>
    <ligand>
        <name>heme b</name>
        <dbReference type="ChEBI" id="CHEBI:60344"/>
        <label>b566</label>
    </ligand>
    <ligandPart>
        <name>Fe</name>
        <dbReference type="ChEBI" id="CHEBI:18248"/>
    </ligandPart>
</feature>
<feature type="binding site" description="axial binding residue" evidence="2">
    <location>
        <position position="182"/>
    </location>
    <ligand>
        <name>heme b</name>
        <dbReference type="ChEBI" id="CHEBI:60344"/>
        <label>b562</label>
    </ligand>
    <ligandPart>
        <name>Fe</name>
        <dbReference type="ChEBI" id="CHEBI:18248"/>
    </ligandPart>
</feature>
<feature type="binding site" description="axial binding residue" evidence="2">
    <location>
        <position position="196"/>
    </location>
    <ligand>
        <name>heme b</name>
        <dbReference type="ChEBI" id="CHEBI:60344"/>
        <label>b566</label>
    </ligand>
    <ligandPart>
        <name>Fe</name>
        <dbReference type="ChEBI" id="CHEBI:18248"/>
    </ligandPart>
</feature>
<feature type="binding site" evidence="2">
    <location>
        <position position="201"/>
    </location>
    <ligand>
        <name>a ubiquinone</name>
        <dbReference type="ChEBI" id="CHEBI:16389"/>
    </ligand>
</feature>
<comment type="function">
    <text evidence="2">Component of the ubiquinol-cytochrome c reductase complex (complex III or cytochrome b-c1 complex) that is part of the mitochondrial respiratory chain. The b-c1 complex mediates electron transfer from ubiquinol to cytochrome c. Contributes to the generation of a proton gradient across the mitochondrial membrane that is then used for ATP synthesis.</text>
</comment>
<comment type="cofactor">
    <cofactor evidence="2">
        <name>heme b</name>
        <dbReference type="ChEBI" id="CHEBI:60344"/>
    </cofactor>
    <text evidence="2">Binds 2 heme b groups non-covalently.</text>
</comment>
<comment type="subunit">
    <text evidence="2">The cytochrome bc1 complex contains 3 respiratory subunits (MT-CYB, CYC1 and UQCRFS1), 2 core proteins (UQCRC1 and UQCRC2) and probably 6 low-molecular weight proteins.</text>
</comment>
<comment type="subcellular location">
    <subcellularLocation>
        <location evidence="2">Mitochondrion inner membrane</location>
        <topology evidence="2">Multi-pass membrane protein</topology>
    </subcellularLocation>
</comment>
<comment type="miscellaneous">
    <text evidence="1">Heme 1 (or BL or b562) is low-potential and absorbs at about 562 nm, and heme 2 (or BH or b566) is high-potential and absorbs at about 566 nm.</text>
</comment>
<comment type="similarity">
    <text evidence="3 4">Belongs to the cytochrome b family.</text>
</comment>
<comment type="caution">
    <text evidence="2">The full-length protein contains only eight transmembrane helices, not nine as predicted by bioinformatics tools.</text>
</comment>